<keyword id="KW-0067">ATP-binding</keyword>
<keyword id="KW-0269">Exonuclease</keyword>
<keyword id="KW-0378">Hydrolase</keyword>
<keyword id="KW-0479">Metal-binding</keyword>
<keyword id="KW-0540">Nuclease</keyword>
<keyword id="KW-0547">Nucleotide-binding</keyword>
<keyword id="KW-1185">Reference proteome</keyword>
<comment type="function">
    <text evidence="2 3 4 5 11">An exonuclease that acts preferentially on linear dsDNA, processively degrading it from 5'-3', releasing 5'-phosphomononucleotides. Initiates on 5'-phosphate and 5'-hydroxyl ends. Also acts on linear ssDNA, nicked DNA and RNA. ATP enhances but is not necessary for exonuclease activity; has ATPase activity that is not stimulated by DNA (PubMed:7836278). The old protein kills E.coli recB and recC mutants and interferes with phage lambda growth (PubMed:4913204). Both the exonuclease and ATPase activities are required in vivo (PubMed:32009148). Probably interferes with lambda phage by degrading its linear DNA (Probable). Isolated as a mutant able to lysogenize E.coli strain C cells normally not susceptible to lysis by phage P2 (PubMed:4884707).</text>
</comment>
<comment type="catalytic activity">
    <reaction evidence="5">
        <text>Exonucleolytic cleavage in the 5'- to 3'-direction to yield nucleoside 5'-phosphates.</text>
        <dbReference type="EC" id="3.1.11.3"/>
    </reaction>
</comment>
<comment type="cofactor">
    <cofactor evidence="5">
        <name>Mg(2+)</name>
        <dbReference type="ChEBI" id="CHEBI:18420"/>
    </cofactor>
    <text evidence="5">Mg(2+) gave the most activity in a maltose-binding protein fusion.</text>
</comment>
<comment type="biophysicochemical properties">
    <phDependence>
        <text evidence="5">Optimum pH is 7.2-8.8.</text>
    </phDependence>
</comment>
<comment type="similarity">
    <text evidence="10">Belongs to the class 1 OLD nuclease family.</text>
</comment>
<protein>
    <recommendedName>
        <fullName evidence="8">Old nuclease</fullName>
        <ecNumber evidence="5">3.1.11.3</ecNumber>
    </recommendedName>
    <alternativeName>
        <fullName evidence="9">Exodeoxyribonuclease Old</fullName>
    </alternativeName>
    <alternativeName>
        <fullName evidence="7">Overcoming lysogenization defect protein</fullName>
        <shortName evidence="8">Old</shortName>
    </alternativeName>
</protein>
<evidence type="ECO:0000250" key="1">
    <source>
        <dbReference type="UniProtKB" id="E8PLM2"/>
    </source>
</evidence>
<evidence type="ECO:0000269" key="2">
    <source>
    </source>
</evidence>
<evidence type="ECO:0000269" key="3">
    <source>
    </source>
</evidence>
<evidence type="ECO:0000269" key="4">
    <source>
    </source>
</evidence>
<evidence type="ECO:0000269" key="5">
    <source>
    </source>
</evidence>
<evidence type="ECO:0000303" key="6">
    <source>
    </source>
</evidence>
<evidence type="ECO:0000303" key="7">
    <source>
    </source>
</evidence>
<evidence type="ECO:0000303" key="8">
    <source>
    </source>
</evidence>
<evidence type="ECO:0000305" key="9"/>
<evidence type="ECO:0000305" key="10">
    <source>
    </source>
</evidence>
<evidence type="ECO:0000305" key="11">
    <source>
    </source>
</evidence>
<feature type="chain" id="PRO_0000165246" description="Old nuclease">
    <location>
        <begin position="1"/>
        <end position="586"/>
    </location>
</feature>
<feature type="region of interest" description="ATPase domain N-terminus" evidence="10">
    <location>
        <begin position="1"/>
        <end position="163"/>
    </location>
</feature>
<feature type="region of interest" description="Dimerization domain" evidence="10">
    <location>
        <begin position="164"/>
        <end position="270"/>
    </location>
</feature>
<feature type="region of interest" description="ATPase domain C-terminus" evidence="1">
    <location>
        <begin position="271"/>
        <end position="390"/>
    </location>
</feature>
<feature type="region of interest" description="Toprim domain" evidence="6">
    <location>
        <begin position="393"/>
        <end position="586"/>
    </location>
</feature>
<feature type="active site" description="Stabilizes transition state or protonates leaving group" evidence="10">
    <location>
        <position position="570"/>
    </location>
</feature>
<feature type="binding site" evidence="10">
    <location>
        <begin position="34"/>
        <end position="38"/>
    </location>
    <ligand>
        <name>ATP</name>
        <dbReference type="ChEBI" id="CHEBI:30616"/>
    </ligand>
</feature>
<feature type="binding site" evidence="10">
    <location>
        <position position="398"/>
    </location>
    <ligand>
        <name>a divalent metal cation</name>
        <dbReference type="ChEBI" id="CHEBI:60240"/>
        <label>1</label>
    </ligand>
</feature>
<feature type="binding site" evidence="10">
    <location>
        <position position="402"/>
    </location>
    <ligand>
        <name>a divalent metal cation</name>
        <dbReference type="ChEBI" id="CHEBI:60240"/>
        <label>2</label>
    </ligand>
</feature>
<feature type="binding site" evidence="10">
    <location>
        <position position="453"/>
    </location>
    <ligand>
        <name>a divalent metal cation</name>
        <dbReference type="ChEBI" id="CHEBI:60240"/>
        <label>1</label>
    </ligand>
</feature>
<feature type="binding site" evidence="10">
    <location>
        <position position="455"/>
    </location>
    <ligand>
        <name>a divalent metal cation</name>
        <dbReference type="ChEBI" id="CHEBI:60240"/>
        <label>1</label>
    </ligand>
</feature>
<feature type="binding site" evidence="10">
    <location>
        <position position="541"/>
    </location>
    <ligand>
        <name>a divalent metal cation</name>
        <dbReference type="ChEBI" id="CHEBI:60240"/>
        <label>2</label>
    </ligand>
</feature>
<feature type="binding site" evidence="10">
    <location>
        <position position="543"/>
    </location>
    <ligand>
        <name>a divalent metal cation</name>
        <dbReference type="ChEBI" id="CHEBI:60240"/>
        <label>2</label>
    </ligand>
</feature>
<feature type="mutagenesis site" description="No longer kills recB-recC deleted host cells." evidence="2">
    <original>K</original>
    <variation>A</variation>
    <location>
        <position position="37"/>
    </location>
</feature>
<feature type="mutagenesis site" description="No longer kills recB-recC deleted host cells." evidence="2">
    <original>D</original>
    <variation>A</variation>
    <location>
        <position position="299"/>
    </location>
</feature>
<feature type="mutagenesis site" description="No longer kills recB-recC deleted host cells." evidence="2">
    <original>H</original>
    <variation>A</variation>
    <location>
        <position position="306"/>
    </location>
</feature>
<feature type="mutagenesis site" description="No longer kills recB-recC deleted host cells." evidence="2">
    <original>H</original>
    <variation>A</variation>
    <location>
        <position position="332"/>
    </location>
</feature>
<feature type="mutagenesis site" description="No longer kills recB-recC deleted host cells." evidence="2">
    <original>E</original>
    <variation>A</variation>
    <location>
        <position position="398"/>
    </location>
</feature>
<feature type="mutagenesis site" description="No longer kills recB-recC deleted host cells." evidence="2">
    <original>E</original>
    <variation>A</variation>
    <location>
        <position position="402"/>
    </location>
</feature>
<feature type="mutagenesis site" description="No longer kills recB-recC deleted host cells." evidence="2">
    <original>D</original>
    <variation>A</variation>
    <location>
        <position position="453"/>
    </location>
</feature>
<feature type="mutagenesis site" description="No longer kills recB-recC deleted host cells." evidence="2">
    <original>D</original>
    <variation>A</variation>
    <location>
        <position position="455"/>
    </location>
</feature>
<feature type="mutagenesis site" description="No longer kills recB-recC deleted host cells, viability is reduced." evidence="2">
    <original>D</original>
    <variation>A</variation>
    <location>
        <position position="541"/>
    </location>
</feature>
<feature type="mutagenesis site" description="No longer kills recB-recC deleted host cells." evidence="2">
    <original>E</original>
    <variation>A</variation>
    <location>
        <position position="543"/>
    </location>
</feature>
<feature type="mutagenesis site" description="No longer kills recB-recC deleted host cells." evidence="2">
    <original>K</original>
    <variation>A</variation>
    <location>
        <position position="550"/>
    </location>
</feature>
<accession>P13520</accession>
<dbReference type="EC" id="3.1.11.3" evidence="5"/>
<dbReference type="EMBL" id="AF063097">
    <property type="protein sequence ID" value="AAD03309.1"/>
    <property type="molecule type" value="Genomic_DNA"/>
</dbReference>
<dbReference type="PIR" id="JQ0184">
    <property type="entry name" value="JQ0184"/>
</dbReference>
<dbReference type="RefSeq" id="NP_046798.1">
    <property type="nucleotide sequence ID" value="NC_001895.1"/>
</dbReference>
<dbReference type="SMR" id="P13520"/>
<dbReference type="GeneID" id="77440823"/>
<dbReference type="KEGG" id="vg:77440823"/>
<dbReference type="Proteomes" id="UP000009092">
    <property type="component" value="Genome"/>
</dbReference>
<dbReference type="GO" id="GO:0005524">
    <property type="term" value="F:ATP binding"/>
    <property type="evidence" value="ECO:0007669"/>
    <property type="project" value="UniProtKB-KW"/>
</dbReference>
<dbReference type="GO" id="GO:0004527">
    <property type="term" value="F:exonuclease activity"/>
    <property type="evidence" value="ECO:0007669"/>
    <property type="project" value="UniProtKB-KW"/>
</dbReference>
<dbReference type="GO" id="GO:0046872">
    <property type="term" value="F:metal ion binding"/>
    <property type="evidence" value="ECO:0007669"/>
    <property type="project" value="UniProtKB-KW"/>
</dbReference>
<dbReference type="CDD" id="cd01026">
    <property type="entry name" value="TOPRIM_OLD"/>
    <property type="match status" value="1"/>
</dbReference>
<dbReference type="Gene3D" id="3.40.50.300">
    <property type="entry name" value="P-loop containing nucleotide triphosphate hydrolases"/>
    <property type="match status" value="1"/>
</dbReference>
<dbReference type="InterPro" id="IPR041685">
    <property type="entry name" value="AAA_GajA/Old/RecF-like"/>
</dbReference>
<dbReference type="InterPro" id="IPR051396">
    <property type="entry name" value="Bact_Antivir_Def_Nuclease"/>
</dbReference>
<dbReference type="InterPro" id="IPR027417">
    <property type="entry name" value="P-loop_NTPase"/>
</dbReference>
<dbReference type="InterPro" id="IPR034139">
    <property type="entry name" value="TOPRIM_OLD"/>
</dbReference>
<dbReference type="PANTHER" id="PTHR43581">
    <property type="entry name" value="ATP/GTP PHOSPHATASE"/>
    <property type="match status" value="1"/>
</dbReference>
<dbReference type="PANTHER" id="PTHR43581:SF4">
    <property type="entry name" value="ATP_GTP PHOSPHATASE"/>
    <property type="match status" value="1"/>
</dbReference>
<dbReference type="Pfam" id="PF13175">
    <property type="entry name" value="AAA_15"/>
    <property type="match status" value="2"/>
</dbReference>
<dbReference type="Pfam" id="PF20469">
    <property type="entry name" value="OLD-like_TOPRIM"/>
    <property type="match status" value="1"/>
</dbReference>
<dbReference type="SUPFAM" id="SSF52540">
    <property type="entry name" value="P-loop containing nucleoside triphosphate hydrolases"/>
    <property type="match status" value="1"/>
</dbReference>
<organismHost>
    <name type="scientific">Enterobacteriaceae</name>
    <dbReference type="NCBI Taxonomy" id="543"/>
</organismHost>
<organism>
    <name type="scientific">Escherichia phage P2</name>
    <name type="common">Bacteriophage P2</name>
    <dbReference type="NCBI Taxonomy" id="2905681"/>
    <lineage>
        <taxon>Viruses</taxon>
        <taxon>Duplodnaviria</taxon>
        <taxon>Heunggongvirae</taxon>
        <taxon>Uroviricota</taxon>
        <taxon>Caudoviricetes</taxon>
        <taxon>Peduoviridae</taxon>
        <taxon>Peduovirus</taxon>
        <taxon>Peduovirus P2</taxon>
    </lineage>
</organism>
<sequence length="586" mass="65381">MTVRLASVSISNFRSCKSTSAILRPFTALVGYNNAGKSNIILAIKWLLDGSLISESDVYDPTHPVSVEGVIQGITDDTLSLLTEENQQKIAPFIIDGTLTFARRQEFNKETGKAKKSLDVYDGTTWKKNPGGIDGAISNIFPEPIHIPAMSDAVEDSTKCKNTTTIGKILSAIVSEIKQEHEEKFSKNISEIGKYLSHNGENRLESLNKIDSGVNKKVNQFFPDVSVKLHFPTPTLDEIFKSGTLKVFESREDEPVMRDISRFGHGTQRSIQMALIQYLAEIKKENSESKKSNTLIFIDEPELYLHPSAINSVRESLVTLSESGYQVIISTHSASMLSAKHAANAIQVCKDSNGTIARKTISEKIEELYKSSSPQLHSAFTLSNSSYLLFSEEVLLVEGKTETNVLYALYKKINGHELNPSKICIVAVDGKGSLFKMSQIINAIGIKTRILADCDFLSNILLTEHKDLLSTECDNLLTALIESINSGELSLNTKVTTFESFKSISSKDFIKICNHEKTQKHIHEIHQKLKDNGIYIWKSGDIEAVYGFGKKQTEWDSLLDCLCDESKDVRAVIKKYDEMEDFIKWI</sequence>
<reference key="1">
    <citation type="journal article" date="1989" name="Gene">
        <title>The P2 phage old gene: sequence, transcription and translational control.</title>
        <authorList>
            <person name="Haggaard-Ljungquist E."/>
            <person name="Barreiro V."/>
            <person name="Calendar R."/>
            <person name="Kurnit D.M."/>
            <person name="Cheng H."/>
        </authorList>
    </citation>
    <scope>NUCLEOTIDE SEQUENCE [GENOMIC DNA]</scope>
</reference>
<reference key="2">
    <citation type="submission" date="1998-05" db="EMBL/GenBank/DDBJ databases">
        <title>The complete genome of bacteriophage P2.</title>
        <authorList>
            <person name="Christie G.E."/>
            <person name="Haggard-Ljungquist E."/>
            <person name="Calendar R."/>
        </authorList>
    </citation>
    <scope>SEQUENCE REVISION TO 395</scope>
</reference>
<reference key="3">
    <citation type="journal article" date="1969" name="Virology">
        <title>Mutants of Escherichia coli unable to be lysogenized by the temperate bacteriophage P2.</title>
        <authorList>
            <person name="Sironi G."/>
        </authorList>
    </citation>
    <scope>FUNCTION</scope>
</reference>
<reference key="4">
    <citation type="journal article" date="1970" name="Proc. Natl. Acad. Sci. U.S.A.">
        <title>Bacteriophage lambda; abortive infection of bacteria lysogenic for phage P2.</title>
        <authorList>
            <person name="Lindahl G."/>
            <person name="Sironi G."/>
            <person name="Bialy H."/>
            <person name="Calendar R."/>
        </authorList>
    </citation>
    <scope>FUNCTION</scope>
</reference>
<reference key="5">
    <citation type="journal article" date="1995" name="J. Bacteriol.">
        <title>The old exonuclease of bacteriophage P2.</title>
        <authorList>
            <person name="Myung H."/>
            <person name="Calendar R."/>
        </authorList>
    </citation>
    <scope>FUNCTION AS AN EXONUCLEASE</scope>
    <scope>CATALYTIC ACTIVITY</scope>
    <scope>COFACTOR</scope>
    <scope>BIOPHYSICOCHEMICAL PROPERTIES</scope>
</reference>
<reference key="6">
    <citation type="journal article" date="2020" name="Nucleic Acids Res.">
        <title>The full-length structure of Thermus scotoductus OLD defines the ATP hydrolysis properties and catalytic mechanism of Class 1 OLD family nucleases.</title>
        <authorList>
            <person name="Schiltz C.J."/>
            <person name="Adams M.C."/>
            <person name="Chappie J.S."/>
        </authorList>
    </citation>
    <scope>FUNCTION</scope>
    <scope>CATALYTIC ACTIVITY</scope>
    <scope>PROBABLE ACTIVE SITE</scope>
    <scope>COFACTOR</scope>
    <scope>MUTAGENESIS OF LYS-37; ASP-299; HIS-306; HIS-332; GLU-398; GLU-402; ASP-453; ASP-455; ASP-541; GLU-543 AND LYS-550</scope>
</reference>
<name>VOLD_BPP2</name>
<proteinExistence type="evidence at protein level"/>
<gene>
    <name evidence="7" type="primary">old</name>
</gene>